<organism>
    <name type="scientific">Rhizobium etli (strain ATCC 51251 / DSM 11541 / JCM 21823 / NBRC 15573 / CFN 42)</name>
    <dbReference type="NCBI Taxonomy" id="347834"/>
    <lineage>
        <taxon>Bacteria</taxon>
        <taxon>Pseudomonadati</taxon>
        <taxon>Pseudomonadota</taxon>
        <taxon>Alphaproteobacteria</taxon>
        <taxon>Hyphomicrobiales</taxon>
        <taxon>Rhizobiaceae</taxon>
        <taxon>Rhizobium/Agrobacterium group</taxon>
        <taxon>Rhizobium</taxon>
    </lineage>
</organism>
<reference key="1">
    <citation type="journal article" date="2006" name="Proc. Natl. Acad. Sci. U.S.A.">
        <title>The partitioned Rhizobium etli genome: genetic and metabolic redundancy in seven interacting replicons.</title>
        <authorList>
            <person name="Gonzalez V."/>
            <person name="Santamaria R.I."/>
            <person name="Bustos P."/>
            <person name="Hernandez-Gonzalez I."/>
            <person name="Medrano-Soto A."/>
            <person name="Moreno-Hagelsieb G."/>
            <person name="Janga S.C."/>
            <person name="Ramirez M.A."/>
            <person name="Jimenez-Jacinto V."/>
            <person name="Collado-Vides J."/>
            <person name="Davila G."/>
        </authorList>
    </citation>
    <scope>NUCLEOTIDE SEQUENCE [LARGE SCALE GENOMIC DNA]</scope>
    <source>
        <strain>ATCC 51251 / DSM 11541 / JCM 21823 / NBRC 15573 / CFN 42</strain>
    </source>
</reference>
<keyword id="KW-0489">Methyltransferase</keyword>
<keyword id="KW-1185">Reference proteome</keyword>
<keyword id="KW-0949">S-adenosyl-L-methionine</keyword>
<keyword id="KW-0808">Transferase</keyword>
<proteinExistence type="predicted"/>
<protein>
    <recommendedName>
        <fullName>Probable chemotaxis protein methyltransferase</fullName>
        <ecNumber>2.1.1.80</ecNumber>
    </recommendedName>
</protein>
<name>CHER_RHIEC</name>
<sequence length="268" mass="30638">MIYSDAGIFLNETKASLVYSRLSKHIRNLGLSGFREYCELVASPAGAAARREMLSHLTTNFTRFFRENHHFEHLRDHVLPELLQRARSGGRVRIWSAASSDGQEPYSIALTVLSLMPNVADYDFKILATDIDPKILAIARAGAYDESALETVSPAMRKQWFSEVEVQGRRKFQVDDRVKRLITYNELNLMAQWPFKGKFDVIFCRNVVIYFDEPTQMKIWQRFAGLLPEGGHLYIGHSERVSGEAKHVFDNIGITTYRYTTKGLGRKA</sequence>
<evidence type="ECO:0000250" key="1"/>
<evidence type="ECO:0000255" key="2">
    <source>
        <dbReference type="PROSITE-ProRule" id="PRU00051"/>
    </source>
</evidence>
<evidence type="ECO:0000305" key="3"/>
<feature type="chain" id="PRO_0000239042" description="Probable chemotaxis protein methyltransferase">
    <location>
        <begin position="1"/>
        <end position="268"/>
    </location>
</feature>
<feature type="domain" description="CheR-type methyltransferase" evidence="2">
    <location>
        <begin position="1"/>
        <end position="262"/>
    </location>
</feature>
<feature type="binding site" evidence="1">
    <location>
        <position position="60"/>
    </location>
    <ligand>
        <name>S-adenosyl-L-methionine</name>
        <dbReference type="ChEBI" id="CHEBI:59789"/>
    </ligand>
</feature>
<feature type="binding site" evidence="1">
    <location>
        <position position="62"/>
    </location>
    <ligand>
        <name>S-adenosyl-L-methionine</name>
        <dbReference type="ChEBI" id="CHEBI:59789"/>
    </ligand>
</feature>
<feature type="binding site" evidence="1">
    <location>
        <position position="66"/>
    </location>
    <ligand>
        <name>S-adenosyl-L-methionine</name>
        <dbReference type="ChEBI" id="CHEBI:59789"/>
    </ligand>
</feature>
<feature type="binding site" evidence="1">
    <location>
        <position position="104"/>
    </location>
    <ligand>
        <name>S-adenosyl-L-methionine</name>
        <dbReference type="ChEBI" id="CHEBI:59789"/>
    </ligand>
</feature>
<feature type="binding site" evidence="1">
    <location>
        <position position="130"/>
    </location>
    <ligand>
        <name>S-adenosyl-L-methionine</name>
        <dbReference type="ChEBI" id="CHEBI:59789"/>
    </ligand>
</feature>
<feature type="binding site" evidence="1">
    <location>
        <begin position="188"/>
        <end position="189"/>
    </location>
    <ligand>
        <name>S-adenosyl-L-methionine</name>
        <dbReference type="ChEBI" id="CHEBI:59789"/>
    </ligand>
</feature>
<feature type="binding site" evidence="1">
    <location>
        <begin position="205"/>
        <end position="206"/>
    </location>
    <ligand>
        <name>S-adenosyl-L-methionine</name>
        <dbReference type="ChEBI" id="CHEBI:59789"/>
    </ligand>
</feature>
<dbReference type="EC" id="2.1.1.80"/>
<dbReference type="EMBL" id="CP000133">
    <property type="protein sequence ID" value="ABC89457.1"/>
    <property type="molecule type" value="Genomic_DNA"/>
</dbReference>
<dbReference type="SMR" id="Q2KCH9"/>
<dbReference type="eggNOG" id="COG1352">
    <property type="taxonomic scope" value="Bacteria"/>
</dbReference>
<dbReference type="HOGENOM" id="CLU_025854_0_0_5"/>
<dbReference type="Proteomes" id="UP000001936">
    <property type="component" value="Chromosome"/>
</dbReference>
<dbReference type="GO" id="GO:0008983">
    <property type="term" value="F:protein-glutamate O-methyltransferase activity"/>
    <property type="evidence" value="ECO:0007669"/>
    <property type="project" value="UniProtKB-EC"/>
</dbReference>
<dbReference type="GO" id="GO:0032259">
    <property type="term" value="P:methylation"/>
    <property type="evidence" value="ECO:0007669"/>
    <property type="project" value="UniProtKB-KW"/>
</dbReference>
<dbReference type="Gene3D" id="1.10.155.10">
    <property type="entry name" value="Chemotaxis receptor methyltransferase CheR, N-terminal domain"/>
    <property type="match status" value="1"/>
</dbReference>
<dbReference type="Gene3D" id="3.40.50.150">
    <property type="entry name" value="Vaccinia Virus protein VP39"/>
    <property type="match status" value="1"/>
</dbReference>
<dbReference type="InterPro" id="IPR050903">
    <property type="entry name" value="Bact_Chemotaxis_MeTrfase"/>
</dbReference>
<dbReference type="InterPro" id="IPR026024">
    <property type="entry name" value="Chemotaxis_MeTrfase_CheR"/>
</dbReference>
<dbReference type="InterPro" id="IPR022642">
    <property type="entry name" value="CheR_C"/>
</dbReference>
<dbReference type="InterPro" id="IPR000780">
    <property type="entry name" value="CheR_MeTrfase"/>
</dbReference>
<dbReference type="InterPro" id="IPR022641">
    <property type="entry name" value="CheR_N"/>
</dbReference>
<dbReference type="InterPro" id="IPR036804">
    <property type="entry name" value="CheR_N_sf"/>
</dbReference>
<dbReference type="InterPro" id="IPR029063">
    <property type="entry name" value="SAM-dependent_MTases_sf"/>
</dbReference>
<dbReference type="PANTHER" id="PTHR24422">
    <property type="entry name" value="CHEMOTAXIS PROTEIN METHYLTRANSFERASE"/>
    <property type="match status" value="1"/>
</dbReference>
<dbReference type="PANTHER" id="PTHR24422:SF19">
    <property type="entry name" value="CHEMOTAXIS PROTEIN METHYLTRANSFERASE"/>
    <property type="match status" value="1"/>
</dbReference>
<dbReference type="Pfam" id="PF01739">
    <property type="entry name" value="CheR"/>
    <property type="match status" value="1"/>
</dbReference>
<dbReference type="Pfam" id="PF03705">
    <property type="entry name" value="CheR_N"/>
    <property type="match status" value="1"/>
</dbReference>
<dbReference type="PIRSF" id="PIRSF000410">
    <property type="entry name" value="CheR"/>
    <property type="match status" value="1"/>
</dbReference>
<dbReference type="PRINTS" id="PR00996">
    <property type="entry name" value="CHERMTFRASE"/>
</dbReference>
<dbReference type="SMART" id="SM00138">
    <property type="entry name" value="MeTrc"/>
    <property type="match status" value="1"/>
</dbReference>
<dbReference type="SUPFAM" id="SSF47757">
    <property type="entry name" value="Chemotaxis receptor methyltransferase CheR, N-terminal domain"/>
    <property type="match status" value="1"/>
</dbReference>
<dbReference type="SUPFAM" id="SSF53335">
    <property type="entry name" value="S-adenosyl-L-methionine-dependent methyltransferases"/>
    <property type="match status" value="1"/>
</dbReference>
<dbReference type="PROSITE" id="PS50123">
    <property type="entry name" value="CHER"/>
    <property type="match status" value="1"/>
</dbReference>
<gene>
    <name type="primary">cheRch1</name>
    <name type="ordered locus">RHE_CH00641</name>
</gene>
<comment type="function">
    <text evidence="3">Methylation of the membrane-bound methyl-accepting chemotaxis proteins (MCP) to form gamma-glutamyl methyl ester residues in MCP.</text>
</comment>
<comment type="catalytic activity">
    <reaction>
        <text>L-glutamyl-[protein] + S-adenosyl-L-methionine = [protein]-L-glutamate 5-O-methyl ester + S-adenosyl-L-homocysteine</text>
        <dbReference type="Rhea" id="RHEA:24452"/>
        <dbReference type="Rhea" id="RHEA-COMP:10208"/>
        <dbReference type="Rhea" id="RHEA-COMP:10311"/>
        <dbReference type="ChEBI" id="CHEBI:29973"/>
        <dbReference type="ChEBI" id="CHEBI:57856"/>
        <dbReference type="ChEBI" id="CHEBI:59789"/>
        <dbReference type="ChEBI" id="CHEBI:82795"/>
        <dbReference type="EC" id="2.1.1.80"/>
    </reaction>
</comment>
<accession>Q2KCH9</accession>